<dbReference type="EC" id="3.2.2.22"/>
<dbReference type="EMBL" id="AY625281">
    <property type="protein sequence ID" value="AAT37532.1"/>
    <property type="molecule type" value="mRNA"/>
</dbReference>
<dbReference type="PDB" id="1CE7">
    <property type="method" value="X-ray"/>
    <property type="resolution" value="2.70 A"/>
    <property type="chains" value="A=1-240, B=266-519"/>
</dbReference>
<dbReference type="PDB" id="1PC8">
    <property type="method" value="X-ray"/>
    <property type="resolution" value="3.80 A"/>
    <property type="chains" value="A=1-240, B=266-520"/>
</dbReference>
<dbReference type="PDB" id="1TFM">
    <property type="method" value="X-ray"/>
    <property type="resolution" value="2.80 A"/>
    <property type="chains" value="A=1-240, B=266-520"/>
</dbReference>
<dbReference type="PDB" id="1YF8">
    <property type="method" value="X-ray"/>
    <property type="resolution" value="2.80 A"/>
    <property type="chains" value="A=1-240, B=266-520"/>
</dbReference>
<dbReference type="PDB" id="2MLL">
    <property type="method" value="X-ray"/>
    <property type="resolution" value="2.70 A"/>
    <property type="chains" value="A=1-240, B=266-519"/>
</dbReference>
<dbReference type="PDBsum" id="1CE7"/>
<dbReference type="PDBsum" id="1PC8"/>
<dbReference type="PDBsum" id="1TFM"/>
<dbReference type="PDBsum" id="1YF8"/>
<dbReference type="PDBsum" id="2MLL"/>
<dbReference type="SMR" id="Q6ITZ3"/>
<dbReference type="CAZy" id="CBM13">
    <property type="family name" value="Carbohydrate-Binding Module Family 13"/>
</dbReference>
<dbReference type="UniLectin" id="Q6ITZ3"/>
<dbReference type="iPTMnet" id="Q6ITZ3"/>
<dbReference type="EvolutionaryTrace" id="Q6ITZ3"/>
<dbReference type="GO" id="GO:0030246">
    <property type="term" value="F:carbohydrate binding"/>
    <property type="evidence" value="ECO:0007669"/>
    <property type="project" value="UniProtKB-KW"/>
</dbReference>
<dbReference type="GO" id="GO:0030598">
    <property type="term" value="F:rRNA N-glycosylase activity"/>
    <property type="evidence" value="ECO:0007669"/>
    <property type="project" value="UniProtKB-EC"/>
</dbReference>
<dbReference type="GO" id="GO:0090729">
    <property type="term" value="F:toxin activity"/>
    <property type="evidence" value="ECO:0007669"/>
    <property type="project" value="UniProtKB-KW"/>
</dbReference>
<dbReference type="GO" id="GO:0006952">
    <property type="term" value="P:defense response"/>
    <property type="evidence" value="ECO:0007669"/>
    <property type="project" value="UniProtKB-KW"/>
</dbReference>
<dbReference type="GO" id="GO:0017148">
    <property type="term" value="P:negative regulation of translation"/>
    <property type="evidence" value="ECO:0007669"/>
    <property type="project" value="UniProtKB-KW"/>
</dbReference>
<dbReference type="CDD" id="cd23485">
    <property type="entry name" value="beta-trefoil_Ricin_MLs_rpt1"/>
    <property type="match status" value="1"/>
</dbReference>
<dbReference type="CDD" id="cd23492">
    <property type="entry name" value="beta-trefoil_Ricin_MLs_rpt2"/>
    <property type="match status" value="1"/>
</dbReference>
<dbReference type="FunFam" id="2.80.10.50:FF:000076">
    <property type="entry name" value="Beta-galactoside-specific lectin 1"/>
    <property type="match status" value="1"/>
</dbReference>
<dbReference type="Gene3D" id="2.80.10.50">
    <property type="match status" value="2"/>
</dbReference>
<dbReference type="Gene3D" id="3.40.420.10">
    <property type="entry name" value="Ricin (A subunit), domain 1"/>
    <property type="match status" value="1"/>
</dbReference>
<dbReference type="Gene3D" id="4.10.470.10">
    <property type="entry name" value="Ricin (A Subunit), domain 2"/>
    <property type="match status" value="1"/>
</dbReference>
<dbReference type="InterPro" id="IPR036041">
    <property type="entry name" value="Ribosome-inact_prot_sf"/>
</dbReference>
<dbReference type="InterPro" id="IPR017989">
    <property type="entry name" value="Ribosome_inactivat_1/2"/>
</dbReference>
<dbReference type="InterPro" id="IPR001574">
    <property type="entry name" value="Ribosome_inactivat_prot"/>
</dbReference>
<dbReference type="InterPro" id="IPR016138">
    <property type="entry name" value="Ribosome_inactivat_prot_sub1"/>
</dbReference>
<dbReference type="InterPro" id="IPR016139">
    <property type="entry name" value="Ribosome_inactivat_prot_sub2"/>
</dbReference>
<dbReference type="InterPro" id="IPR035992">
    <property type="entry name" value="Ricin_B-like_lectins"/>
</dbReference>
<dbReference type="InterPro" id="IPR000772">
    <property type="entry name" value="Ricin_B_lectin"/>
</dbReference>
<dbReference type="PANTHER" id="PTHR33453">
    <property type="match status" value="1"/>
</dbReference>
<dbReference type="PANTHER" id="PTHR33453:SF34">
    <property type="entry name" value="RIBOSOME-INACTIVATING PROTEIN"/>
    <property type="match status" value="1"/>
</dbReference>
<dbReference type="Pfam" id="PF00652">
    <property type="entry name" value="Ricin_B_lectin"/>
    <property type="match status" value="2"/>
</dbReference>
<dbReference type="Pfam" id="PF00161">
    <property type="entry name" value="RIP"/>
    <property type="match status" value="1"/>
</dbReference>
<dbReference type="PRINTS" id="PR00396">
    <property type="entry name" value="SHIGARICIN"/>
</dbReference>
<dbReference type="SMART" id="SM00458">
    <property type="entry name" value="RICIN"/>
    <property type="match status" value="2"/>
</dbReference>
<dbReference type="SUPFAM" id="SSF56371">
    <property type="entry name" value="Ribosome inactivating proteins (RIP)"/>
    <property type="match status" value="1"/>
</dbReference>
<dbReference type="SUPFAM" id="SSF50370">
    <property type="entry name" value="Ricin B-like lectins"/>
    <property type="match status" value="2"/>
</dbReference>
<dbReference type="PROSITE" id="PS50231">
    <property type="entry name" value="RICIN_B_LECTIN"/>
    <property type="match status" value="2"/>
</dbReference>
<accession>Q6ITZ3</accession>
<accession>Q9S7D0</accession>
<sequence length="520" mass="56957">YERLDLDVTSQTTGEEYFRFITLLRDYVSSGSFSNEIPLLRQSGGGVEAARFVLVELTNEGGDSITAAIDVTNLYVVAYQAGSQSYFLSGPGTHLFTGTTRSSLPFNGSYPDLEQYAGHRKQIPLGIDQLIQSVTALRFPGNTRTQARSILILIQMISEAARFNPILWRARQYINSGASFLPDVYMLELETSWGQQSTQVQQSTEGVFNNPIRLAIPGNFVTLTNVRDVIASLAIMLFVCGERPSSSDVRYWPLVIRPVIADDVTCSASEPTVRIVGRNGMNVDVRDDDFHDGNQIQLWPSKSNNDPNQLWTIKRDGTIRSNGSCLTTYGYTAGVYVMIFDCNTAVREATIWQIWGNGTIINPRSNLALAASSGIKGTTLTVQTLDYTLGQGWLAGNDTAPREVTIYGFNDLCMESNGGSVWVETCVSQQNDRWALYGDGSIRPEQNQDQCLTSGRDSVAGINIVSCSGGSSGQRWVFTNEGAILNLKNGLAMDVANPGLGQIIIYPATGKPNQMWLPVP</sequence>
<name>ML4_VISAL</name>
<reference evidence="8 9" key="1">
    <citation type="journal article" date="2004" name="Arch. Biochem. Biophys.">
        <title>Purification and characterization of four isoforms of Himalayan mistletoe ribosome-inactivating protein from Viscum album having unique sugar affinity.</title>
        <authorList>
            <person name="Mishra V."/>
            <person name="Sharma R.S."/>
            <person name="Yadav S."/>
            <person name="Babu C.R."/>
            <person name="Singh T.P."/>
        </authorList>
    </citation>
    <scope>NUCLEOTIDE SEQUENCE [MRNA]</scope>
    <scope>PROTEIN SEQUENCE OF 1-20</scope>
    <scope>FUNCTION</scope>
    <source>
        <tissue evidence="6">Leaf</tissue>
    </source>
</reference>
<reference evidence="8" key="2">
    <citation type="journal article" date="1992" name="Anticancer Drugs">
        <title>Identity of the N-terminal sequences of the three A chains of mistletoe (Viscum album L.) lectins: homology with ricin-like plant toxins and single-chain ribosome-inhibiting proteins.</title>
        <authorList>
            <person name="Dietrich J.B."/>
            <person name="Ribereau-Gayon G."/>
            <person name="Jung M.L."/>
            <person name="Franz H."/>
            <person name="Beck J.P."/>
            <person name="Anton R."/>
        </authorList>
    </citation>
    <scope>PROTEIN SEQUENCE OF 1-29</scope>
    <scope>FUNCTION</scope>
</reference>
<reference evidence="8" key="3">
    <citation type="journal article" date="1999" name="Biochem. Biophys. Res. Commun.">
        <title>Crystal structure of mistletoe lectin I from Viscum album.</title>
        <authorList>
            <person name="Krauspenhaar R."/>
            <person name="Eschenburg S."/>
            <person name="Perbandt M."/>
            <person name="Kornilov V."/>
            <person name="Konareva N."/>
            <person name="Mikailova I."/>
            <person name="Stoeva S."/>
            <person name="Wacker R."/>
            <person name="Maier T."/>
            <person name="Singh T.P."/>
            <person name="Mikhailov A."/>
            <person name="Voelter W."/>
            <person name="Betzel C."/>
        </authorList>
    </citation>
    <scope>X-RAY CRYSTALLOGRAPHY (2.8 ANGSTROMS) OF 1-240 AND 266-520</scope>
    <scope>SUBUNIT</scope>
    <scope>GLYCOSYLATION AT ASN-107; ASN-357 AND ASN-397</scope>
</reference>
<reference evidence="8 10" key="4">
    <citation type="journal article" date="2004" name="Acta Crystallogr. D">
        <title>Structure of a novel ribosome-inactivating protein from a hemi-parasitic plant inhabiting the northwestern Himalayas.</title>
        <authorList>
            <person name="Mishra V."/>
            <person name="Ethayathulla A.S."/>
            <person name="Sharma R.S."/>
            <person name="Yadav S."/>
            <person name="Krauspenhaar R."/>
            <person name="Betzel C."/>
            <person name="Babu C.R."/>
            <person name="Singh T.P."/>
        </authorList>
    </citation>
    <scope>X-RAY CRYSTALLOGRAPHY (3.8 ANGSTROMS) OF 1-240 AND 266-520</scope>
    <scope>SUBUNIT</scope>
    <scope>ACTIVE SITE</scope>
    <scope>DISULFIDE BONDS</scope>
</reference>
<reference evidence="8" key="5">
    <citation type="submission" date="2004-12" db="PDB data bank">
        <title>Crystal structure of Himalayan mistletoe rip reveals the presence of a natural inhibitor and a new functionally active sugar-binding site.</title>
        <authorList>
            <person name="Mishra V."/>
            <person name="Bilgrami S."/>
            <person name="Sharma R.S."/>
            <person name="Kaur P."/>
            <person name="Yadav S."/>
            <person name="Krauspenhaar R."/>
            <person name="Betzel C."/>
            <person name="Voelter W."/>
            <person name="Babu C.R."/>
            <person name="Singh T.P."/>
        </authorList>
    </citation>
    <scope>X-RAY CRYSTALLOGRAPHY (2.8 ANGSTROMS) OF 1-240 AND 266-520</scope>
</reference>
<protein>
    <recommendedName>
        <fullName>Beta-galactoside-specific lectin 4</fullName>
    </recommendedName>
    <alternativeName>
        <fullName>Beta-galactoside-specific lectin IV</fullName>
    </alternativeName>
    <component>
        <recommendedName>
            <fullName>Beta-galactoside-specific lectin 4 chain A</fullName>
            <ecNumber>3.2.2.22</ecNumber>
        </recommendedName>
        <alternativeName>
            <fullName>Beta-galactoside-specific lectin IV chain A</fullName>
        </alternativeName>
        <alternativeName>
            <fullName>ML-4 A</fullName>
        </alternativeName>
        <alternativeName>
            <fullName>ML-IV A</fullName>
        </alternativeName>
        <alternativeName>
            <fullName>rRNA N-glycosidase</fullName>
        </alternativeName>
    </component>
    <component>
        <recommendedName>
            <fullName>Beta-galactoside-specific lectin 4 chain B</fullName>
        </recommendedName>
        <alternativeName>
            <fullName>Beta-galactoside-specific lectin IV chain B</fullName>
        </alternativeName>
        <alternativeName>
            <fullName>ML-4B</fullName>
        </alternativeName>
        <alternativeName>
            <fullName>ML-IV B</fullName>
        </alternativeName>
    </component>
</protein>
<comment type="function">
    <text evidence="1 5 6">The A chain is responsible for inhibiting protein synthesis through the catalytic inactivation of 60S ribosomal subunits by removing adenine from position 4,324 of 28S rRNA. The B chain binds to cell receptors and probably facilitates the entry into the cell of the A chain; B chains are also responsible for cell agglutination (lectin activity). Inhibits growth of the human tumor cell line Molt4.</text>
</comment>
<comment type="catalytic activity">
    <reaction evidence="1">
        <text>Endohydrolysis of the N-glycosidic bond at one specific adenosine on the 28S rRNA.</text>
        <dbReference type="EC" id="3.2.2.22"/>
    </reaction>
</comment>
<comment type="subunit">
    <text evidence="4 7">Disulfide-linked dimer of A and B chains.</text>
</comment>
<comment type="miscellaneous">
    <text evidence="6">Several isoforms exist.</text>
</comment>
<comment type="similarity">
    <text evidence="2">Belongs to the ribosome-inactivating protein family. Type 2 RIP subfamily.</text>
</comment>
<evidence type="ECO:0000250" key="1">
    <source>
        <dbReference type="UniProtKB" id="P81446"/>
    </source>
</evidence>
<evidence type="ECO:0000255" key="2"/>
<evidence type="ECO:0000255" key="3">
    <source>
        <dbReference type="PROSITE-ProRule" id="PRU00174"/>
    </source>
</evidence>
<evidence type="ECO:0000269" key="4">
    <source>
    </source>
</evidence>
<evidence type="ECO:0000269" key="5">
    <source>
    </source>
</evidence>
<evidence type="ECO:0000269" key="6">
    <source>
    </source>
</evidence>
<evidence type="ECO:0000269" key="7">
    <source>
    </source>
</evidence>
<evidence type="ECO:0000305" key="8"/>
<evidence type="ECO:0000312" key="9">
    <source>
        <dbReference type="EMBL" id="AAT37532.1"/>
    </source>
</evidence>
<evidence type="ECO:0000312" key="10">
    <source>
        <dbReference type="PDB" id="1PC8"/>
    </source>
</evidence>
<evidence type="ECO:0007829" key="11">
    <source>
        <dbReference type="PDB" id="1CE7"/>
    </source>
</evidence>
<evidence type="ECO:0007829" key="12">
    <source>
        <dbReference type="PDB" id="1TFM"/>
    </source>
</evidence>
<keyword id="KW-0002">3D-structure</keyword>
<keyword id="KW-0903">Direct protein sequencing</keyword>
<keyword id="KW-1015">Disulfide bond</keyword>
<keyword id="KW-0325">Glycoprotein</keyword>
<keyword id="KW-0378">Hydrolase</keyword>
<keyword id="KW-0430">Lectin</keyword>
<keyword id="KW-0611">Plant defense</keyword>
<keyword id="KW-0652">Protein synthesis inhibitor</keyword>
<keyword id="KW-0677">Repeat</keyword>
<keyword id="KW-0800">Toxin</keyword>
<organism>
    <name type="scientific">Viscum album</name>
    <name type="common">European mistletoe</name>
    <dbReference type="NCBI Taxonomy" id="3972"/>
    <lineage>
        <taxon>Eukaryota</taxon>
        <taxon>Viridiplantae</taxon>
        <taxon>Streptophyta</taxon>
        <taxon>Embryophyta</taxon>
        <taxon>Tracheophyta</taxon>
        <taxon>Spermatophyta</taxon>
        <taxon>Magnoliopsida</taxon>
        <taxon>eudicotyledons</taxon>
        <taxon>Gunneridae</taxon>
        <taxon>Pentapetalae</taxon>
        <taxon>Santalales</taxon>
        <taxon>Viscaceae</taxon>
        <taxon>Viscum</taxon>
    </lineage>
</organism>
<proteinExistence type="evidence at protein level"/>
<feature type="chain" id="PRO_5000093497" description="Beta-galactoside-specific lectin 4 chain A">
    <location>
        <begin position="1"/>
        <end position="240"/>
    </location>
</feature>
<feature type="propeptide" id="PRO_0000284730" description="Connecting peptide" evidence="8">
    <location>
        <begin position="241"/>
        <end position="265"/>
    </location>
</feature>
<feature type="chain" id="PRO_5000093498" description="Beta-galactoside-specific lectin 4 chain B">
    <location>
        <begin position="266"/>
        <end position="520"/>
    </location>
</feature>
<feature type="domain" description="Ricin B-type lectin 1" evidence="3">
    <location>
        <begin position="269"/>
        <end position="396"/>
    </location>
</feature>
<feature type="domain" description="Ricin B-type lectin 2" evidence="3">
    <location>
        <begin position="400"/>
        <end position="520"/>
    </location>
</feature>
<feature type="active site" evidence="7">
    <location>
        <position position="159"/>
    </location>
</feature>
<feature type="binding site" evidence="1">
    <location>
        <begin position="284"/>
        <end position="286"/>
    </location>
    <ligand>
        <name>D-galactose</name>
        <dbReference type="ChEBI" id="CHEBI:4139"/>
    </ligand>
</feature>
<feature type="binding site" evidence="1">
    <location>
        <begin position="494"/>
        <end position="496"/>
    </location>
    <ligand>
        <name>D-galactose</name>
        <dbReference type="ChEBI" id="CHEBI:4139"/>
    </ligand>
</feature>
<feature type="glycosylation site" description="N-linked (GlcNAc...) asparagine" evidence="4">
    <location>
        <position position="107"/>
    </location>
</feature>
<feature type="glycosylation site" description="N-linked (GlcNAc...) asparagine" evidence="2">
    <location>
        <position position="322"/>
    </location>
</feature>
<feature type="glycosylation site" description="N-linked (GlcNAc...) asparagine" evidence="4">
    <location>
        <position position="357"/>
    </location>
</feature>
<feature type="glycosylation site" description="N-linked (GlcNAc...) asparagine" evidence="4">
    <location>
        <position position="397"/>
    </location>
</feature>
<feature type="disulfide bond" description="Interchain (between A and B chains)" evidence="3 4 7">
    <location>
        <begin position="240"/>
        <end position="266"/>
    </location>
</feature>
<feature type="disulfide bond" evidence="3 7">
    <location>
        <begin position="325"/>
        <end position="342"/>
    </location>
</feature>
<feature type="disulfide bond" evidence="3 7">
    <location>
        <begin position="413"/>
        <end position="426"/>
    </location>
</feature>
<feature type="disulfide bond" evidence="3 7">
    <location>
        <begin position="451"/>
        <end position="467"/>
    </location>
</feature>
<feature type="sequence conflict" description="In Ref. 1; AA sequence and 2; AA sequence." evidence="8" ref="1 2">
    <original>D</original>
    <variation>R</variation>
    <location>
        <position position="5"/>
    </location>
</feature>
<feature type="sequence conflict" description="In Ref. 1; AA sequence and 2; AA sequence." evidence="8" ref="1 2">
    <original>D</original>
    <variation>R</variation>
    <location>
        <position position="7"/>
    </location>
</feature>
<feature type="sequence conflict" description="In Ref. 1; AA sequence and 2; AA sequence." evidence="8" ref="1 2">
    <original>S</original>
    <variation>H</variation>
    <location>
        <position position="10"/>
    </location>
</feature>
<feature type="sequence conflict" description="In Ref. 2; AA sequence." evidence="8" ref="2">
    <original>S</original>
    <variation>H</variation>
    <location>
        <position position="29"/>
    </location>
</feature>
<feature type="strand" evidence="11">
    <location>
        <begin position="3"/>
        <end position="11"/>
    </location>
</feature>
<feature type="helix" evidence="11">
    <location>
        <begin position="14"/>
        <end position="28"/>
    </location>
</feature>
<feature type="strand" evidence="11">
    <location>
        <begin position="29"/>
        <end position="34"/>
    </location>
</feature>
<feature type="strand" evidence="11">
    <location>
        <begin position="37"/>
        <end position="40"/>
    </location>
</feature>
<feature type="strand" evidence="12">
    <location>
        <begin position="43"/>
        <end position="45"/>
    </location>
</feature>
<feature type="strand" evidence="11">
    <location>
        <begin position="50"/>
        <end position="59"/>
    </location>
</feature>
<feature type="strand" evidence="11">
    <location>
        <begin position="64"/>
        <end position="70"/>
    </location>
</feature>
<feature type="turn" evidence="11">
    <location>
        <begin position="71"/>
        <end position="73"/>
    </location>
</feature>
<feature type="strand" evidence="11">
    <location>
        <begin position="76"/>
        <end position="80"/>
    </location>
</feature>
<feature type="strand" evidence="11">
    <location>
        <begin position="82"/>
        <end position="87"/>
    </location>
</feature>
<feature type="strand" evidence="11">
    <location>
        <begin position="98"/>
        <end position="101"/>
    </location>
</feature>
<feature type="helix" evidence="11">
    <location>
        <begin position="110"/>
        <end position="117"/>
    </location>
</feature>
<feature type="helix" evidence="12">
    <location>
        <begin position="120"/>
        <end position="122"/>
    </location>
</feature>
<feature type="strand" evidence="11">
    <location>
        <begin position="125"/>
        <end position="127"/>
    </location>
</feature>
<feature type="helix" evidence="11">
    <location>
        <begin position="128"/>
        <end position="138"/>
    </location>
</feature>
<feature type="helix" evidence="11">
    <location>
        <begin position="144"/>
        <end position="156"/>
    </location>
</feature>
<feature type="helix" evidence="11">
    <location>
        <begin position="159"/>
        <end position="162"/>
    </location>
</feature>
<feature type="helix" evidence="11">
    <location>
        <begin position="164"/>
        <end position="176"/>
    </location>
</feature>
<feature type="helix" evidence="11">
    <location>
        <begin position="184"/>
        <end position="190"/>
    </location>
</feature>
<feature type="helix" evidence="11">
    <location>
        <begin position="193"/>
        <end position="202"/>
    </location>
</feature>
<feature type="strand" evidence="11">
    <location>
        <begin position="204"/>
        <end position="214"/>
    </location>
</feature>
<feature type="strand" evidence="11">
    <location>
        <begin position="217"/>
        <end position="219"/>
    </location>
</feature>
<feature type="strand" evidence="11">
    <location>
        <begin position="221"/>
        <end position="225"/>
    </location>
</feature>
<feature type="helix" evidence="11">
    <location>
        <begin position="226"/>
        <end position="229"/>
    </location>
</feature>
<feature type="turn" evidence="11">
    <location>
        <begin position="230"/>
        <end position="232"/>
    </location>
</feature>
<feature type="strand" evidence="11">
    <location>
        <begin position="275"/>
        <end position="277"/>
    </location>
</feature>
<feature type="helix" evidence="11">
    <location>
        <begin position="278"/>
        <end position="280"/>
    </location>
</feature>
<feature type="strand" evidence="11">
    <location>
        <begin position="281"/>
        <end position="285"/>
    </location>
</feature>
<feature type="helix" evidence="11">
    <location>
        <begin position="286"/>
        <end position="288"/>
    </location>
</feature>
<feature type="strand" evidence="11">
    <location>
        <begin position="295"/>
        <end position="299"/>
    </location>
</feature>
<feature type="helix" evidence="11">
    <location>
        <begin position="307"/>
        <end position="309"/>
    </location>
</feature>
<feature type="strand" evidence="12">
    <location>
        <begin position="311"/>
        <end position="313"/>
    </location>
</feature>
<feature type="strand" evidence="11">
    <location>
        <begin position="315"/>
        <end position="317"/>
    </location>
</feature>
<feature type="strand" evidence="12">
    <location>
        <begin position="319"/>
        <end position="321"/>
    </location>
</feature>
<feature type="strand" evidence="11">
    <location>
        <begin position="324"/>
        <end position="329"/>
    </location>
</feature>
<feature type="strand" evidence="11">
    <location>
        <begin position="336"/>
        <end position="340"/>
    </location>
</feature>
<feature type="turn" evidence="11">
    <location>
        <begin position="342"/>
        <end position="344"/>
    </location>
</feature>
<feature type="helix" evidence="11">
    <location>
        <begin position="347"/>
        <end position="350"/>
    </location>
</feature>
<feature type="strand" evidence="11">
    <location>
        <begin position="360"/>
        <end position="362"/>
    </location>
</feature>
<feature type="turn" evidence="11">
    <location>
        <begin position="363"/>
        <end position="366"/>
    </location>
</feature>
<feature type="strand" evidence="11">
    <location>
        <begin position="367"/>
        <end position="370"/>
    </location>
</feature>
<feature type="strand" evidence="11">
    <location>
        <begin position="381"/>
        <end position="383"/>
    </location>
</feature>
<feature type="helix" evidence="11">
    <location>
        <begin position="389"/>
        <end position="391"/>
    </location>
</feature>
<feature type="strand" evidence="11">
    <location>
        <begin position="394"/>
        <end position="397"/>
    </location>
</feature>
<feature type="strand" evidence="11">
    <location>
        <begin position="402"/>
        <end position="408"/>
    </location>
</feature>
<feature type="helix" evidence="11">
    <location>
        <begin position="409"/>
        <end position="411"/>
    </location>
</feature>
<feature type="strand" evidence="11">
    <location>
        <begin position="412"/>
        <end position="417"/>
    </location>
</feature>
<feature type="strand" evidence="11">
    <location>
        <begin position="420"/>
        <end position="425"/>
    </location>
</feature>
<feature type="strand" evidence="11">
    <location>
        <begin position="428"/>
        <end position="430"/>
    </location>
</feature>
<feature type="strand" evidence="11">
    <location>
        <begin position="434"/>
        <end position="437"/>
    </location>
</feature>
<feature type="turn" evidence="11">
    <location>
        <begin position="438"/>
        <end position="440"/>
    </location>
</feature>
<feature type="strand" evidence="11">
    <location>
        <begin position="441"/>
        <end position="446"/>
    </location>
</feature>
<feature type="strand" evidence="12">
    <location>
        <begin position="450"/>
        <end position="453"/>
    </location>
</feature>
<feature type="strand" evidence="11">
    <location>
        <begin position="455"/>
        <end position="460"/>
    </location>
</feature>
<feature type="strand" evidence="12">
    <location>
        <begin position="463"/>
        <end position="467"/>
    </location>
</feature>
<feature type="helix" evidence="11">
    <location>
        <begin position="472"/>
        <end position="474"/>
    </location>
</feature>
<feature type="strand" evidence="11">
    <location>
        <begin position="476"/>
        <end position="478"/>
    </location>
</feature>
<feature type="strand" evidence="11">
    <location>
        <begin position="484"/>
        <end position="486"/>
    </location>
</feature>
<feature type="turn" evidence="11">
    <location>
        <begin position="487"/>
        <end position="489"/>
    </location>
</feature>
<feature type="strand" evidence="11">
    <location>
        <begin position="492"/>
        <end position="495"/>
    </location>
</feature>
<feature type="helix" evidence="11">
    <location>
        <begin position="498"/>
        <end position="500"/>
    </location>
</feature>
<feature type="strand" evidence="11">
    <location>
        <begin position="503"/>
        <end position="506"/>
    </location>
</feature>
<feature type="helix" evidence="11">
    <location>
        <begin position="512"/>
        <end position="514"/>
    </location>
</feature>
<feature type="strand" evidence="11">
    <location>
        <begin position="516"/>
        <end position="519"/>
    </location>
</feature>